<keyword id="KW-1185">Reference proteome</keyword>
<evidence type="ECO:0000256" key="1">
    <source>
        <dbReference type="SAM" id="MobiDB-lite"/>
    </source>
</evidence>
<dbReference type="EMBL" id="AK026367">
    <property type="protein sequence ID" value="BAB15461.1"/>
    <property type="molecule type" value="mRNA"/>
</dbReference>
<dbReference type="EMBL" id="AC010086">
    <property type="status" value="NOT_ANNOTATED_CDS"/>
    <property type="molecule type" value="Genomic_DNA"/>
</dbReference>
<dbReference type="EMBL" id="CH471208">
    <property type="protein sequence ID" value="EAX11709.1"/>
    <property type="molecule type" value="Genomic_DNA"/>
</dbReference>
<dbReference type="RefSeq" id="NP_001269400.1">
    <property type="nucleotide sequence ID" value="NM_001282471.1"/>
</dbReference>
<dbReference type="SMR" id="Q9H606"/>
<dbReference type="BioGRID" id="1529424">
    <property type="interactions" value="1"/>
</dbReference>
<dbReference type="iPTMnet" id="Q9H606"/>
<dbReference type="PhosphoSitePlus" id="Q9H606"/>
<dbReference type="BioMuta" id="PRORY"/>
<dbReference type="DMDM" id="74718435"/>
<dbReference type="MassIVE" id="Q9H606"/>
<dbReference type="DNASU" id="100533178"/>
<dbReference type="UCSC" id="uc033fgu.2">
    <property type="organism name" value="human"/>
</dbReference>
<dbReference type="AGR" id="HGNC:38732"/>
<dbReference type="GeneCards" id="PRORY"/>
<dbReference type="HGNC" id="HGNC:38732">
    <property type="gene designation" value="PRORY"/>
</dbReference>
<dbReference type="neXtProt" id="NX_Q9H606"/>
<dbReference type="HOGENOM" id="CLU_1485355_0_0_1"/>
<dbReference type="InParanoid" id="Q9H606"/>
<dbReference type="PAN-GO" id="Q9H606">
    <property type="GO annotations" value="0 GO annotations based on evolutionary models"/>
</dbReference>
<dbReference type="TreeFam" id="TF342244"/>
<dbReference type="PathwayCommons" id="Q9H606"/>
<dbReference type="BioGRID-ORCS" id="100533178">
    <property type="hits" value="6 hits in 660 CRISPR screens"/>
</dbReference>
<dbReference type="ChiTaRS" id="PRORY">
    <property type="organism name" value="human"/>
</dbReference>
<dbReference type="GenomeRNAi" id="100533178"/>
<dbReference type="Pharos" id="Q9H606">
    <property type="development level" value="Tdark"/>
</dbReference>
<dbReference type="PRO" id="PR:Q9H606"/>
<dbReference type="Proteomes" id="UP000005640">
    <property type="component" value="Unplaced"/>
</dbReference>
<dbReference type="RNAct" id="Q9H606">
    <property type="molecule type" value="protein"/>
</dbReference>
<feature type="chain" id="PRO_0000348077" description="Proline-rich protein, Y-linked">
    <location>
        <begin position="1"/>
        <end position="182"/>
    </location>
</feature>
<feature type="domain" description="DUF1725">
    <location>
        <begin position="154"/>
        <end position="167"/>
    </location>
</feature>
<feature type="region of interest" description="Disordered" evidence="1">
    <location>
        <begin position="1"/>
        <end position="22"/>
    </location>
</feature>
<feature type="region of interest" description="Disordered" evidence="1">
    <location>
        <begin position="89"/>
        <end position="108"/>
    </location>
</feature>
<feature type="compositionally biased region" description="Pro residues" evidence="1">
    <location>
        <begin position="91"/>
        <end position="108"/>
    </location>
</feature>
<accession>Q9H606</accession>
<gene>
    <name type="primary">PRORY</name>
    <name type="synonym">CYorf17</name>
</gene>
<reference key="1">
    <citation type="journal article" date="2004" name="Nat. Genet.">
        <title>Complete sequencing and characterization of 21,243 full-length human cDNAs.</title>
        <authorList>
            <person name="Ota T."/>
            <person name="Suzuki Y."/>
            <person name="Nishikawa T."/>
            <person name="Otsuki T."/>
            <person name="Sugiyama T."/>
            <person name="Irie R."/>
            <person name="Wakamatsu A."/>
            <person name="Hayashi K."/>
            <person name="Sato H."/>
            <person name="Nagai K."/>
            <person name="Kimura K."/>
            <person name="Makita H."/>
            <person name="Sekine M."/>
            <person name="Obayashi M."/>
            <person name="Nishi T."/>
            <person name="Shibahara T."/>
            <person name="Tanaka T."/>
            <person name="Ishii S."/>
            <person name="Yamamoto J."/>
            <person name="Saito K."/>
            <person name="Kawai Y."/>
            <person name="Isono Y."/>
            <person name="Nakamura Y."/>
            <person name="Nagahari K."/>
            <person name="Murakami K."/>
            <person name="Yasuda T."/>
            <person name="Iwayanagi T."/>
            <person name="Wagatsuma M."/>
            <person name="Shiratori A."/>
            <person name="Sudo H."/>
            <person name="Hosoiri T."/>
            <person name="Kaku Y."/>
            <person name="Kodaira H."/>
            <person name="Kondo H."/>
            <person name="Sugawara M."/>
            <person name="Takahashi M."/>
            <person name="Kanda K."/>
            <person name="Yokoi T."/>
            <person name="Furuya T."/>
            <person name="Kikkawa E."/>
            <person name="Omura Y."/>
            <person name="Abe K."/>
            <person name="Kamihara K."/>
            <person name="Katsuta N."/>
            <person name="Sato K."/>
            <person name="Tanikawa M."/>
            <person name="Yamazaki M."/>
            <person name="Ninomiya K."/>
            <person name="Ishibashi T."/>
            <person name="Yamashita H."/>
            <person name="Murakawa K."/>
            <person name="Fujimori K."/>
            <person name="Tanai H."/>
            <person name="Kimata M."/>
            <person name="Watanabe M."/>
            <person name="Hiraoka S."/>
            <person name="Chiba Y."/>
            <person name="Ishida S."/>
            <person name="Ono Y."/>
            <person name="Takiguchi S."/>
            <person name="Watanabe S."/>
            <person name="Yosida M."/>
            <person name="Hotuta T."/>
            <person name="Kusano J."/>
            <person name="Kanehori K."/>
            <person name="Takahashi-Fujii A."/>
            <person name="Hara H."/>
            <person name="Tanase T.-O."/>
            <person name="Nomura Y."/>
            <person name="Togiya S."/>
            <person name="Komai F."/>
            <person name="Hara R."/>
            <person name="Takeuchi K."/>
            <person name="Arita M."/>
            <person name="Imose N."/>
            <person name="Musashino K."/>
            <person name="Yuuki H."/>
            <person name="Oshima A."/>
            <person name="Sasaki N."/>
            <person name="Aotsuka S."/>
            <person name="Yoshikawa Y."/>
            <person name="Matsunawa H."/>
            <person name="Ichihara T."/>
            <person name="Shiohata N."/>
            <person name="Sano S."/>
            <person name="Moriya S."/>
            <person name="Momiyama H."/>
            <person name="Satoh N."/>
            <person name="Takami S."/>
            <person name="Terashima Y."/>
            <person name="Suzuki O."/>
            <person name="Nakagawa S."/>
            <person name="Senoh A."/>
            <person name="Mizoguchi H."/>
            <person name="Goto Y."/>
            <person name="Shimizu F."/>
            <person name="Wakebe H."/>
            <person name="Hishigaki H."/>
            <person name="Watanabe T."/>
            <person name="Sugiyama A."/>
            <person name="Takemoto M."/>
            <person name="Kawakami B."/>
            <person name="Yamazaki M."/>
            <person name="Watanabe K."/>
            <person name="Kumagai A."/>
            <person name="Itakura S."/>
            <person name="Fukuzumi Y."/>
            <person name="Fujimori Y."/>
            <person name="Komiyama M."/>
            <person name="Tashiro H."/>
            <person name="Tanigami A."/>
            <person name="Fujiwara T."/>
            <person name="Ono T."/>
            <person name="Yamada K."/>
            <person name="Fujii Y."/>
            <person name="Ozaki K."/>
            <person name="Hirao M."/>
            <person name="Ohmori Y."/>
            <person name="Kawabata A."/>
            <person name="Hikiji T."/>
            <person name="Kobatake N."/>
            <person name="Inagaki H."/>
            <person name="Ikema Y."/>
            <person name="Okamoto S."/>
            <person name="Okitani R."/>
            <person name="Kawakami T."/>
            <person name="Noguchi S."/>
            <person name="Itoh T."/>
            <person name="Shigeta K."/>
            <person name="Senba T."/>
            <person name="Matsumura K."/>
            <person name="Nakajima Y."/>
            <person name="Mizuno T."/>
            <person name="Morinaga M."/>
            <person name="Sasaki M."/>
            <person name="Togashi T."/>
            <person name="Oyama M."/>
            <person name="Hata H."/>
            <person name="Watanabe M."/>
            <person name="Komatsu T."/>
            <person name="Mizushima-Sugano J."/>
            <person name="Satoh T."/>
            <person name="Shirai Y."/>
            <person name="Takahashi Y."/>
            <person name="Nakagawa K."/>
            <person name="Okumura K."/>
            <person name="Nagase T."/>
            <person name="Nomura N."/>
            <person name="Kikuchi H."/>
            <person name="Masuho Y."/>
            <person name="Yamashita R."/>
            <person name="Nakai K."/>
            <person name="Yada T."/>
            <person name="Nakamura Y."/>
            <person name="Ohara O."/>
            <person name="Isogai T."/>
            <person name="Sugano S."/>
        </authorList>
    </citation>
    <scope>NUCLEOTIDE SEQUENCE [LARGE SCALE MRNA]</scope>
    <source>
        <tissue>Small intestine</tissue>
    </source>
</reference>
<reference key="2">
    <citation type="journal article" date="2003" name="Nature">
        <title>The male-specific region of the human Y chromosome is a mosaic of discrete sequence classes.</title>
        <authorList>
            <person name="Skaletsky H."/>
            <person name="Kuroda-Kawaguchi T."/>
            <person name="Minx P.J."/>
            <person name="Cordum H.S."/>
            <person name="Hillier L.W."/>
            <person name="Brown L.G."/>
            <person name="Repping S."/>
            <person name="Pyntikova T."/>
            <person name="Ali J."/>
            <person name="Bieri T."/>
            <person name="Chinwalla A."/>
            <person name="Delehaunty A."/>
            <person name="Delehaunty K."/>
            <person name="Du H."/>
            <person name="Fewell G."/>
            <person name="Fulton L."/>
            <person name="Fulton R."/>
            <person name="Graves T.A."/>
            <person name="Hou S.-F."/>
            <person name="Latrielle P."/>
            <person name="Leonard S."/>
            <person name="Mardis E."/>
            <person name="Maupin R."/>
            <person name="McPherson J."/>
            <person name="Miner T."/>
            <person name="Nash W."/>
            <person name="Nguyen C."/>
            <person name="Ozersky P."/>
            <person name="Pepin K."/>
            <person name="Rock S."/>
            <person name="Rohlfing T."/>
            <person name="Scott K."/>
            <person name="Schultz B."/>
            <person name="Strong C."/>
            <person name="Tin-Wollam A."/>
            <person name="Yang S.-P."/>
            <person name="Waterston R.H."/>
            <person name="Wilson R.K."/>
            <person name="Rozen S."/>
            <person name="Page D.C."/>
        </authorList>
    </citation>
    <scope>NUCLEOTIDE SEQUENCE [LARGE SCALE GENOMIC DNA]</scope>
</reference>
<reference key="3">
    <citation type="submission" date="2005-09" db="EMBL/GenBank/DDBJ databases">
        <authorList>
            <person name="Mural R.J."/>
            <person name="Istrail S."/>
            <person name="Sutton G.G."/>
            <person name="Florea L."/>
            <person name="Halpern A.L."/>
            <person name="Mobarry C.M."/>
            <person name="Lippert R."/>
            <person name="Walenz B."/>
            <person name="Shatkay H."/>
            <person name="Dew I."/>
            <person name="Miller J.R."/>
            <person name="Flanigan M.J."/>
            <person name="Edwards N.J."/>
            <person name="Bolanos R."/>
            <person name="Fasulo D."/>
            <person name="Halldorsson B.V."/>
            <person name="Hannenhalli S."/>
            <person name="Turner R."/>
            <person name="Yooseph S."/>
            <person name="Lu F."/>
            <person name="Nusskern D.R."/>
            <person name="Shue B.C."/>
            <person name="Zheng X.H."/>
            <person name="Zhong F."/>
            <person name="Delcher A.L."/>
            <person name="Huson D.H."/>
            <person name="Kravitz S.A."/>
            <person name="Mouchard L."/>
            <person name="Reinert K."/>
            <person name="Remington K.A."/>
            <person name="Clark A.G."/>
            <person name="Waterman M.S."/>
            <person name="Eichler E.E."/>
            <person name="Adams M.D."/>
            <person name="Hunkapiller M.W."/>
            <person name="Myers E.W."/>
            <person name="Venter J.C."/>
        </authorList>
    </citation>
    <scope>NUCLEOTIDE SEQUENCE [LARGE SCALE GENOMIC DNA]</scope>
</reference>
<sequence length="182" mass="19976">MMRRSPSGLKSPRVSQGRKPRDPESLLFLRCCLGSEPHNLSSLLSPEAGQEPLPKLLPQPLAGHAAWGIHGVPTSLLLAGECWGQGMAVPADPPPASPYRTSPRPPPGPLPRYRPQQHLLLPLGRLHALCPGCPLQQSLQFERGTLSAPRLWSWMKLETIILSKLSQGQKTKHRMFSLISES</sequence>
<organism>
    <name type="scientific">Homo sapiens</name>
    <name type="common">Human</name>
    <dbReference type="NCBI Taxonomy" id="9606"/>
    <lineage>
        <taxon>Eukaryota</taxon>
        <taxon>Metazoa</taxon>
        <taxon>Chordata</taxon>
        <taxon>Craniata</taxon>
        <taxon>Vertebrata</taxon>
        <taxon>Euteleostomi</taxon>
        <taxon>Mammalia</taxon>
        <taxon>Eutheria</taxon>
        <taxon>Euarchontoglires</taxon>
        <taxon>Primates</taxon>
        <taxon>Haplorrhini</taxon>
        <taxon>Catarrhini</taxon>
        <taxon>Hominidae</taxon>
        <taxon>Homo</taxon>
    </lineage>
</organism>
<name>PRORY_HUMAN</name>
<proteinExistence type="evidence at transcript level"/>
<protein>
    <recommendedName>
        <fullName>Proline-rich protein, Y-linked</fullName>
    </recommendedName>
</protein>